<organism>
    <name type="scientific">Hoplocephalus stephensii</name>
    <name type="common">Stephens's banded snake</name>
    <dbReference type="NCBI Taxonomy" id="196418"/>
    <lineage>
        <taxon>Eukaryota</taxon>
        <taxon>Metazoa</taxon>
        <taxon>Chordata</taxon>
        <taxon>Craniata</taxon>
        <taxon>Vertebrata</taxon>
        <taxon>Euteleostomi</taxon>
        <taxon>Lepidosauria</taxon>
        <taxon>Squamata</taxon>
        <taxon>Bifurcata</taxon>
        <taxon>Unidentata</taxon>
        <taxon>Episquamata</taxon>
        <taxon>Toxicofera</taxon>
        <taxon>Serpentes</taxon>
        <taxon>Colubroidea</taxon>
        <taxon>Elapidae</taxon>
        <taxon>Notechinae</taxon>
        <taxon>Hoplocephalus</taxon>
    </lineage>
</organism>
<keyword id="KW-1015">Disulfide bond</keyword>
<keyword id="KW-0872">Ion channel impairing toxin</keyword>
<keyword id="KW-0528">Neurotoxin</keyword>
<keyword id="KW-0964">Secreted</keyword>
<keyword id="KW-0732">Signal</keyword>
<keyword id="KW-0800">Toxin</keyword>
<dbReference type="EMBL" id="DQ084039">
    <property type="protein sequence ID" value="AAZ38984.1"/>
    <property type="molecule type" value="mRNA"/>
</dbReference>
<dbReference type="SMR" id="Q3SB03"/>
<dbReference type="GO" id="GO:0005576">
    <property type="term" value="C:extracellular region"/>
    <property type="evidence" value="ECO:0007669"/>
    <property type="project" value="UniProtKB-SubCell"/>
</dbReference>
<dbReference type="GO" id="GO:0099106">
    <property type="term" value="F:ion channel regulator activity"/>
    <property type="evidence" value="ECO:0007669"/>
    <property type="project" value="UniProtKB-KW"/>
</dbReference>
<dbReference type="GO" id="GO:0090729">
    <property type="term" value="F:toxin activity"/>
    <property type="evidence" value="ECO:0007669"/>
    <property type="project" value="UniProtKB-KW"/>
</dbReference>
<dbReference type="CDD" id="cd05383">
    <property type="entry name" value="CAP_CRISP"/>
    <property type="match status" value="1"/>
</dbReference>
<dbReference type="FunFam" id="1.10.10.740:FF:000001">
    <property type="entry name" value="Cysteine-rich secretory protein 2"/>
    <property type="match status" value="1"/>
</dbReference>
<dbReference type="FunFam" id="3.40.33.10:FF:000005">
    <property type="entry name" value="Cysteine-rich secretory protein 2"/>
    <property type="match status" value="1"/>
</dbReference>
<dbReference type="Gene3D" id="3.40.33.10">
    <property type="entry name" value="CAP"/>
    <property type="match status" value="1"/>
</dbReference>
<dbReference type="Gene3D" id="1.10.10.740">
    <property type="entry name" value="Crisp domain"/>
    <property type="match status" value="1"/>
</dbReference>
<dbReference type="InterPro" id="IPR018244">
    <property type="entry name" value="Allrgn_V5/Tpx1_CS"/>
</dbReference>
<dbReference type="InterPro" id="IPR014044">
    <property type="entry name" value="CAP_dom"/>
</dbReference>
<dbReference type="InterPro" id="IPR035940">
    <property type="entry name" value="CAP_sf"/>
</dbReference>
<dbReference type="InterPro" id="IPR042076">
    <property type="entry name" value="Crisp-like_dom"/>
</dbReference>
<dbReference type="InterPro" id="IPR001283">
    <property type="entry name" value="CRISP-related"/>
</dbReference>
<dbReference type="InterPro" id="IPR013871">
    <property type="entry name" value="Cysteine_rich_secretory"/>
</dbReference>
<dbReference type="InterPro" id="IPR034117">
    <property type="entry name" value="SCP_CRISP"/>
</dbReference>
<dbReference type="InterPro" id="IPR003582">
    <property type="entry name" value="ShKT_dom"/>
</dbReference>
<dbReference type="PANTHER" id="PTHR10334">
    <property type="entry name" value="CYSTEINE-RICH SECRETORY PROTEIN-RELATED"/>
    <property type="match status" value="1"/>
</dbReference>
<dbReference type="Pfam" id="PF00188">
    <property type="entry name" value="CAP"/>
    <property type="match status" value="1"/>
</dbReference>
<dbReference type="Pfam" id="PF08562">
    <property type="entry name" value="Crisp"/>
    <property type="match status" value="1"/>
</dbReference>
<dbReference type="PRINTS" id="PR00837">
    <property type="entry name" value="V5TPXLIKE"/>
</dbReference>
<dbReference type="SMART" id="SM00198">
    <property type="entry name" value="SCP"/>
    <property type="match status" value="1"/>
</dbReference>
<dbReference type="SUPFAM" id="SSF57546">
    <property type="entry name" value="Crisp domain-like"/>
    <property type="match status" value="1"/>
</dbReference>
<dbReference type="SUPFAM" id="SSF55797">
    <property type="entry name" value="PR-1-like"/>
    <property type="match status" value="1"/>
</dbReference>
<dbReference type="PROSITE" id="PS01009">
    <property type="entry name" value="CRISP_1"/>
    <property type="match status" value="1"/>
</dbReference>
<dbReference type="PROSITE" id="PS01010">
    <property type="entry name" value="CRISP_2"/>
    <property type="match status" value="1"/>
</dbReference>
<dbReference type="PROSITE" id="PS51670">
    <property type="entry name" value="SHKT"/>
    <property type="match status" value="1"/>
</dbReference>
<comment type="function">
    <text evidence="1">Blocks olfactory (CNGA2) and retinal (CNGA1) CNG channel currents. Does not affect neither depolarization- nor caffeine-induced contraction of smooth muscle (By similarity).</text>
</comment>
<comment type="subcellular location">
    <subcellularLocation>
        <location evidence="1">Secreted</location>
    </subcellularLocation>
</comment>
<comment type="tissue specificity">
    <text>Expressed by the venom gland.</text>
</comment>
<comment type="similarity">
    <text evidence="3">Belongs to the CRISP family.</text>
</comment>
<evidence type="ECO:0000250" key="1"/>
<evidence type="ECO:0000255" key="2">
    <source>
        <dbReference type="PROSITE-ProRule" id="PRU01005"/>
    </source>
</evidence>
<evidence type="ECO:0000305" key="3"/>
<name>CRVP_HOPST</name>
<protein>
    <recommendedName>
        <fullName>Cysteine-rich venom protein pseudechetoxin-like</fullName>
        <shortName>CRVP</shortName>
    </recommendedName>
</protein>
<accession>Q3SB03</accession>
<proteinExistence type="evidence at transcript level"/>
<sequence>MIAFIVLLSLAAVLQQSSGTVDFASESSNKKDYQKEIVDKHNALRRSVKPTARNMLRMKWNSRAAQNAKRWADRCTFAHSPPHTRTVGKLRCGENIFMSSQPFAWSGVVQAWYDEVKKFVYGIGAKPPGSVIGHYTQVVWYKSHLLGCASAKCSSTKYLYVCQYCPAGNIRGSIATPYKSGPPCADCPSACVNGLCTNPCKHEDDFSNCKALAKNSKCQTAWIKSKCPATCFCHNKII</sequence>
<reference key="1">
    <citation type="journal article" date="2005" name="Cell. Mol. Life Sci.">
        <title>Identification and analysis of venom gland-specific genes from the coastal taipan (Oxyuranus scutellatus) and related species.</title>
        <authorList>
            <person name="St Pierre L."/>
            <person name="Woods R."/>
            <person name="Earl S.T.H."/>
            <person name="Masci P.P."/>
            <person name="Lavin M.F."/>
        </authorList>
    </citation>
    <scope>NUCLEOTIDE SEQUENCE [MRNA]</scope>
    <source>
        <tissue>Venom gland</tissue>
    </source>
</reference>
<feature type="signal peptide" evidence="1">
    <location>
        <begin position="1"/>
        <end position="19"/>
    </location>
</feature>
<feature type="propeptide" id="PRO_0000380664" evidence="1">
    <location>
        <begin position="20"/>
        <end position="28"/>
    </location>
</feature>
<feature type="chain" id="PRO_5000140336" description="Cysteine-rich venom protein pseudechetoxin-like">
    <location>
        <begin position="29"/>
        <end position="238"/>
    </location>
</feature>
<feature type="domain" description="SCP">
    <location>
        <begin position="38"/>
        <end position="164"/>
    </location>
</feature>
<feature type="domain" description="ShKT" evidence="2">
    <location>
        <begin position="200"/>
        <end position="233"/>
    </location>
</feature>
<feature type="disulfide bond" evidence="2">
    <location>
        <begin position="75"/>
        <end position="153"/>
    </location>
</feature>
<feature type="disulfide bond" evidence="2">
    <location>
        <begin position="92"/>
        <end position="165"/>
    </location>
</feature>
<feature type="disulfide bond" evidence="2">
    <location>
        <begin position="148"/>
        <end position="162"/>
    </location>
</feature>
<feature type="disulfide bond" evidence="2">
    <location>
        <begin position="184"/>
        <end position="191"/>
    </location>
</feature>
<feature type="disulfide bond" evidence="2">
    <location>
        <begin position="187"/>
        <end position="196"/>
    </location>
</feature>
<feature type="disulfide bond" evidence="2">
    <location>
        <begin position="200"/>
        <end position="233"/>
    </location>
</feature>
<feature type="disulfide bond" evidence="2">
    <location>
        <begin position="209"/>
        <end position="227"/>
    </location>
</feature>
<feature type="disulfide bond" evidence="2">
    <location>
        <begin position="218"/>
        <end position="231"/>
    </location>
</feature>